<protein>
    <recommendedName>
        <fullName evidence="1">Fructose-1,6-bisphosphatase class 1 1</fullName>
        <shortName evidence="1">FBPase class 1 1</shortName>
        <ecNumber evidence="1">3.1.3.11</ecNumber>
    </recommendedName>
    <alternativeName>
        <fullName evidence="1">D-fructose-1,6-bisphosphate 1-phosphohydrolase class 1 1</fullName>
    </alternativeName>
</protein>
<comment type="catalytic activity">
    <reaction evidence="1">
        <text>beta-D-fructose 1,6-bisphosphate + H2O = beta-D-fructose 6-phosphate + phosphate</text>
        <dbReference type="Rhea" id="RHEA:11064"/>
        <dbReference type="ChEBI" id="CHEBI:15377"/>
        <dbReference type="ChEBI" id="CHEBI:32966"/>
        <dbReference type="ChEBI" id="CHEBI:43474"/>
        <dbReference type="ChEBI" id="CHEBI:57634"/>
        <dbReference type="EC" id="3.1.3.11"/>
    </reaction>
</comment>
<comment type="cofactor">
    <cofactor evidence="1">
        <name>Mg(2+)</name>
        <dbReference type="ChEBI" id="CHEBI:18420"/>
    </cofactor>
    <text evidence="1">Binds 2 magnesium ions per subunit.</text>
</comment>
<comment type="pathway">
    <text evidence="1">Carbohydrate biosynthesis; gluconeogenesis.</text>
</comment>
<comment type="subunit">
    <text evidence="1">Homotetramer.</text>
</comment>
<comment type="subcellular location">
    <subcellularLocation>
        <location evidence="1">Cytoplasm</location>
    </subcellularLocation>
</comment>
<comment type="similarity">
    <text evidence="1">Belongs to the FBPase class 1 family.</text>
</comment>
<reference key="1">
    <citation type="journal article" date="2010" name="PLoS ONE">
        <title>The complete genome sequence of Cupriavidus metallidurans strain CH34, a master survivalist in harsh and anthropogenic environments.</title>
        <authorList>
            <person name="Janssen P.J."/>
            <person name="Van Houdt R."/>
            <person name="Moors H."/>
            <person name="Monsieurs P."/>
            <person name="Morin N."/>
            <person name="Michaux A."/>
            <person name="Benotmane M.A."/>
            <person name="Leys N."/>
            <person name="Vallaeys T."/>
            <person name="Lapidus A."/>
            <person name="Monchy S."/>
            <person name="Medigue C."/>
            <person name="Taghavi S."/>
            <person name="McCorkle S."/>
            <person name="Dunn J."/>
            <person name="van der Lelie D."/>
            <person name="Mergeay M."/>
        </authorList>
    </citation>
    <scope>NUCLEOTIDE SEQUENCE [LARGE SCALE GENOMIC DNA]</scope>
    <source>
        <strain>ATCC 43123 / DSM 2839 / NBRC 102507 / CH34</strain>
    </source>
</reference>
<keyword id="KW-0119">Carbohydrate metabolism</keyword>
<keyword id="KW-0963">Cytoplasm</keyword>
<keyword id="KW-0378">Hydrolase</keyword>
<keyword id="KW-0460">Magnesium</keyword>
<keyword id="KW-0479">Metal-binding</keyword>
<keyword id="KW-1185">Reference proteome</keyword>
<accession>Q1LQ15</accession>
<evidence type="ECO:0000255" key="1">
    <source>
        <dbReference type="HAMAP-Rule" id="MF_01855"/>
    </source>
</evidence>
<dbReference type="EC" id="3.1.3.11" evidence="1"/>
<dbReference type="EMBL" id="CP000352">
    <property type="protein sequence ID" value="ABF07761.1"/>
    <property type="molecule type" value="Genomic_DNA"/>
</dbReference>
<dbReference type="RefSeq" id="WP_008649749.1">
    <property type="nucleotide sequence ID" value="NC_007973.1"/>
</dbReference>
<dbReference type="SMR" id="Q1LQ15"/>
<dbReference type="STRING" id="266264.Rmet_0875"/>
<dbReference type="KEGG" id="rme:Rmet_0875"/>
<dbReference type="eggNOG" id="COG0158">
    <property type="taxonomic scope" value="Bacteria"/>
</dbReference>
<dbReference type="HOGENOM" id="CLU_039977_0_0_4"/>
<dbReference type="UniPathway" id="UPA00138"/>
<dbReference type="Proteomes" id="UP000002429">
    <property type="component" value="Chromosome"/>
</dbReference>
<dbReference type="GO" id="GO:0005829">
    <property type="term" value="C:cytosol"/>
    <property type="evidence" value="ECO:0007669"/>
    <property type="project" value="TreeGrafter"/>
</dbReference>
<dbReference type="GO" id="GO:0042132">
    <property type="term" value="F:fructose 1,6-bisphosphate 1-phosphatase activity"/>
    <property type="evidence" value="ECO:0007669"/>
    <property type="project" value="UniProtKB-UniRule"/>
</dbReference>
<dbReference type="GO" id="GO:0000287">
    <property type="term" value="F:magnesium ion binding"/>
    <property type="evidence" value="ECO:0007669"/>
    <property type="project" value="UniProtKB-UniRule"/>
</dbReference>
<dbReference type="GO" id="GO:0030388">
    <property type="term" value="P:fructose 1,6-bisphosphate metabolic process"/>
    <property type="evidence" value="ECO:0007669"/>
    <property type="project" value="TreeGrafter"/>
</dbReference>
<dbReference type="GO" id="GO:0006002">
    <property type="term" value="P:fructose 6-phosphate metabolic process"/>
    <property type="evidence" value="ECO:0007669"/>
    <property type="project" value="TreeGrafter"/>
</dbReference>
<dbReference type="GO" id="GO:0006000">
    <property type="term" value="P:fructose metabolic process"/>
    <property type="evidence" value="ECO:0007669"/>
    <property type="project" value="TreeGrafter"/>
</dbReference>
<dbReference type="GO" id="GO:0006094">
    <property type="term" value="P:gluconeogenesis"/>
    <property type="evidence" value="ECO:0007669"/>
    <property type="project" value="UniProtKB-UniRule"/>
</dbReference>
<dbReference type="GO" id="GO:0005986">
    <property type="term" value="P:sucrose biosynthetic process"/>
    <property type="evidence" value="ECO:0007669"/>
    <property type="project" value="TreeGrafter"/>
</dbReference>
<dbReference type="CDD" id="cd00354">
    <property type="entry name" value="FBPase"/>
    <property type="match status" value="1"/>
</dbReference>
<dbReference type="FunFam" id="3.30.540.10:FF:000006">
    <property type="entry name" value="Fructose-1,6-bisphosphatase class 1"/>
    <property type="match status" value="1"/>
</dbReference>
<dbReference type="FunFam" id="3.40.190.80:FF:000011">
    <property type="entry name" value="Fructose-1,6-bisphosphatase class 1"/>
    <property type="match status" value="1"/>
</dbReference>
<dbReference type="Gene3D" id="3.40.190.80">
    <property type="match status" value="1"/>
</dbReference>
<dbReference type="Gene3D" id="3.30.540.10">
    <property type="entry name" value="Fructose-1,6-Bisphosphatase, subunit A, domain 1"/>
    <property type="match status" value="1"/>
</dbReference>
<dbReference type="HAMAP" id="MF_01855">
    <property type="entry name" value="FBPase_class1"/>
    <property type="match status" value="1"/>
</dbReference>
<dbReference type="InterPro" id="IPR044015">
    <property type="entry name" value="FBPase_C_dom"/>
</dbReference>
<dbReference type="InterPro" id="IPR000146">
    <property type="entry name" value="FBPase_class-1"/>
</dbReference>
<dbReference type="InterPro" id="IPR033391">
    <property type="entry name" value="FBPase_N"/>
</dbReference>
<dbReference type="InterPro" id="IPR028343">
    <property type="entry name" value="FBPtase"/>
</dbReference>
<dbReference type="NCBIfam" id="NF006778">
    <property type="entry name" value="PRK09293.1-1"/>
    <property type="match status" value="1"/>
</dbReference>
<dbReference type="NCBIfam" id="NF006779">
    <property type="entry name" value="PRK09293.1-3"/>
    <property type="match status" value="1"/>
</dbReference>
<dbReference type="NCBIfam" id="NF006780">
    <property type="entry name" value="PRK09293.1-4"/>
    <property type="match status" value="1"/>
</dbReference>
<dbReference type="PANTHER" id="PTHR11556">
    <property type="entry name" value="FRUCTOSE-1,6-BISPHOSPHATASE-RELATED"/>
    <property type="match status" value="1"/>
</dbReference>
<dbReference type="PANTHER" id="PTHR11556:SF35">
    <property type="entry name" value="SEDOHEPTULOSE-1,7-BISPHOSPHATASE, CHLOROPLASTIC"/>
    <property type="match status" value="1"/>
</dbReference>
<dbReference type="Pfam" id="PF00316">
    <property type="entry name" value="FBPase"/>
    <property type="match status" value="1"/>
</dbReference>
<dbReference type="Pfam" id="PF18913">
    <property type="entry name" value="FBPase_C"/>
    <property type="match status" value="1"/>
</dbReference>
<dbReference type="PIRSF" id="PIRSF500210">
    <property type="entry name" value="FBPtase"/>
    <property type="match status" value="1"/>
</dbReference>
<dbReference type="PIRSF" id="PIRSF000904">
    <property type="entry name" value="FBPtase_SBPase"/>
    <property type="match status" value="1"/>
</dbReference>
<dbReference type="PRINTS" id="PR00115">
    <property type="entry name" value="F16BPHPHTASE"/>
</dbReference>
<dbReference type="SUPFAM" id="SSF56655">
    <property type="entry name" value="Carbohydrate phosphatase"/>
    <property type="match status" value="1"/>
</dbReference>
<sequence length="338" mass="37526">MTRISLTRYLVEEQRKHNTIEPELRLLIEVVARACKAISNAVSKGALAGVLGSAGTGNVQGETQQKLDVIANEVLLDANEWGGHLAAMASEEMDSFYEIPNRYPKGEYLLLFDPLDGSSNIDVNVSIGTIFSVLHMHKPGQTVTEHDFMQPGTQQVAAGYAVYGPQTTLVLTVGNGVHMFTLDREAGSFVLTQSDVMIPEDTKEFAINMSNMRHWAPPVRRYIDECLAGDEGPRGKNFNMRWIASMVADVHRILTRGGVFMYPWDKREPEKPGKLRLMYEANPMAFLVEQAGGAATNGQQRILDVEPTKLHQRVSVILGSKNEVERVTRYHQEDAAKA</sequence>
<gene>
    <name evidence="1" type="primary">fbp1</name>
    <name type="ordered locus">Rmet_0875</name>
</gene>
<organism>
    <name type="scientific">Cupriavidus metallidurans (strain ATCC 43123 / DSM 2839 / NBRC 102507 / CH34)</name>
    <name type="common">Ralstonia metallidurans</name>
    <dbReference type="NCBI Taxonomy" id="266264"/>
    <lineage>
        <taxon>Bacteria</taxon>
        <taxon>Pseudomonadati</taxon>
        <taxon>Pseudomonadota</taxon>
        <taxon>Betaproteobacteria</taxon>
        <taxon>Burkholderiales</taxon>
        <taxon>Burkholderiaceae</taxon>
        <taxon>Cupriavidus</taxon>
    </lineage>
</organism>
<feature type="chain" id="PRO_0000364662" description="Fructose-1,6-bisphosphatase class 1 1">
    <location>
        <begin position="1"/>
        <end position="338"/>
    </location>
</feature>
<feature type="binding site" evidence="1">
    <location>
        <position position="91"/>
    </location>
    <ligand>
        <name>Mg(2+)</name>
        <dbReference type="ChEBI" id="CHEBI:18420"/>
        <label>1</label>
    </ligand>
</feature>
<feature type="binding site" evidence="1">
    <location>
        <position position="113"/>
    </location>
    <ligand>
        <name>Mg(2+)</name>
        <dbReference type="ChEBI" id="CHEBI:18420"/>
        <label>1</label>
    </ligand>
</feature>
<feature type="binding site" evidence="1">
    <location>
        <position position="113"/>
    </location>
    <ligand>
        <name>Mg(2+)</name>
        <dbReference type="ChEBI" id="CHEBI:18420"/>
        <label>2</label>
    </ligand>
</feature>
<feature type="binding site" evidence="1">
    <location>
        <position position="115"/>
    </location>
    <ligand>
        <name>Mg(2+)</name>
        <dbReference type="ChEBI" id="CHEBI:18420"/>
        <label>1</label>
    </ligand>
</feature>
<feature type="binding site" evidence="1">
    <location>
        <begin position="116"/>
        <end position="119"/>
    </location>
    <ligand>
        <name>substrate</name>
    </ligand>
</feature>
<feature type="binding site" evidence="1">
    <location>
        <position position="116"/>
    </location>
    <ligand>
        <name>Mg(2+)</name>
        <dbReference type="ChEBI" id="CHEBI:18420"/>
        <label>2</label>
    </ligand>
</feature>
<feature type="binding site" evidence="1">
    <location>
        <position position="208"/>
    </location>
    <ligand>
        <name>substrate</name>
    </ligand>
</feature>
<feature type="binding site" evidence="1">
    <location>
        <position position="274"/>
    </location>
    <ligand>
        <name>substrate</name>
    </ligand>
</feature>
<feature type="binding site" evidence="1">
    <location>
        <position position="280"/>
    </location>
    <ligand>
        <name>Mg(2+)</name>
        <dbReference type="ChEBI" id="CHEBI:18420"/>
        <label>2</label>
    </ligand>
</feature>
<name>F16A1_CUPMC</name>
<proteinExistence type="inferred from homology"/>